<evidence type="ECO:0000250" key="1"/>
<evidence type="ECO:0000305" key="2"/>
<sequence length="136" mass="15638">MGKDTIADLLTSIRNADMNKKGTVRVVSTNITENIVKILLREGFIESVRKHQESNRYFLVSTLRHQRRKTRKGIYRTRTFLKRISRPGLRIYANYQGIPKVLGGMGIAILSTSRGIMTDREARLNRIGGEVLCYIW</sequence>
<name>RR8_MAIZE</name>
<reference key="1">
    <citation type="journal article" date="1988" name="Eur. J. Biochem.">
        <title>Nucleotide sequence and linkage map position of the genes for ribosomal proteins L14 and S8 in the maize chloroplast genome.</title>
        <authorList>
            <person name="Markmann-Mulisch U."/>
            <person name="Subramanian A.R."/>
        </authorList>
    </citation>
    <scope>NUCLEOTIDE SEQUENCE [GENOMIC DNA]</scope>
</reference>
<reference key="2">
    <citation type="journal article" date="1995" name="J. Mol. Biol.">
        <title>Complete sequence of the maize chloroplast genome: gene content, hotspots of divergence and fine tuning of genetic information by transcript editing.</title>
        <authorList>
            <person name="Maier R.M."/>
            <person name="Neckermann K."/>
            <person name="Igloi G.L."/>
            <person name="Koessel H."/>
        </authorList>
    </citation>
    <scope>NUCLEOTIDE SEQUENCE [LARGE SCALE GENOMIC DNA]</scope>
    <source>
        <strain>cv. B73</strain>
    </source>
</reference>
<keyword id="KW-0150">Chloroplast</keyword>
<keyword id="KW-0934">Plastid</keyword>
<keyword id="KW-1185">Reference proteome</keyword>
<keyword id="KW-0687">Ribonucleoprotein</keyword>
<keyword id="KW-0689">Ribosomal protein</keyword>
<keyword id="KW-0694">RNA-binding</keyword>
<keyword id="KW-0699">rRNA-binding</keyword>
<organism>
    <name type="scientific">Zea mays</name>
    <name type="common">Maize</name>
    <dbReference type="NCBI Taxonomy" id="4577"/>
    <lineage>
        <taxon>Eukaryota</taxon>
        <taxon>Viridiplantae</taxon>
        <taxon>Streptophyta</taxon>
        <taxon>Embryophyta</taxon>
        <taxon>Tracheophyta</taxon>
        <taxon>Spermatophyta</taxon>
        <taxon>Magnoliopsida</taxon>
        <taxon>Liliopsida</taxon>
        <taxon>Poales</taxon>
        <taxon>Poaceae</taxon>
        <taxon>PACMAD clade</taxon>
        <taxon>Panicoideae</taxon>
        <taxon>Andropogonodae</taxon>
        <taxon>Andropogoneae</taxon>
        <taxon>Tripsacinae</taxon>
        <taxon>Zea</taxon>
    </lineage>
</organism>
<gene>
    <name type="primary">rps8</name>
</gene>
<feature type="chain" id="PRO_0000126575" description="Small ribosomal subunit protein uS8c">
    <location>
        <begin position="1"/>
        <end position="136"/>
    </location>
</feature>
<dbReference type="EMBL" id="X06734">
    <property type="protein sequence ID" value="CAA29913.1"/>
    <property type="molecule type" value="Genomic_DNA"/>
</dbReference>
<dbReference type="EMBL" id="X86563">
    <property type="protein sequence ID" value="CAA60321.1"/>
    <property type="molecule type" value="Genomic_DNA"/>
</dbReference>
<dbReference type="PIR" id="S00280">
    <property type="entry name" value="R3ZMBC"/>
</dbReference>
<dbReference type="RefSeq" id="NP_043059.1">
    <property type="nucleotide sequence ID" value="NC_001666.2"/>
</dbReference>
<dbReference type="SMR" id="P08530"/>
<dbReference type="FunCoup" id="P08530">
    <property type="interactions" value="250"/>
</dbReference>
<dbReference type="STRING" id="4577.P08530"/>
<dbReference type="PaxDb" id="4577-GRMZM5G845244_P01"/>
<dbReference type="GeneID" id="845241"/>
<dbReference type="KEGG" id="zma:845241"/>
<dbReference type="MaizeGDB" id="67052"/>
<dbReference type="eggNOG" id="KOG1754">
    <property type="taxonomic scope" value="Eukaryota"/>
</dbReference>
<dbReference type="HOGENOM" id="CLU_098428_0_2_1"/>
<dbReference type="InParanoid" id="P08530"/>
<dbReference type="OMA" id="NSAYHDT"/>
<dbReference type="OrthoDB" id="591253at2759"/>
<dbReference type="Proteomes" id="UP000007305">
    <property type="component" value="Chloroplast"/>
</dbReference>
<dbReference type="GO" id="GO:0009507">
    <property type="term" value="C:chloroplast"/>
    <property type="evidence" value="ECO:0007669"/>
    <property type="project" value="UniProtKB-SubCell"/>
</dbReference>
<dbReference type="GO" id="GO:1990904">
    <property type="term" value="C:ribonucleoprotein complex"/>
    <property type="evidence" value="ECO:0007669"/>
    <property type="project" value="UniProtKB-KW"/>
</dbReference>
<dbReference type="GO" id="GO:0005840">
    <property type="term" value="C:ribosome"/>
    <property type="evidence" value="ECO:0007669"/>
    <property type="project" value="UniProtKB-KW"/>
</dbReference>
<dbReference type="GO" id="GO:0019843">
    <property type="term" value="F:rRNA binding"/>
    <property type="evidence" value="ECO:0007669"/>
    <property type="project" value="UniProtKB-UniRule"/>
</dbReference>
<dbReference type="GO" id="GO:0003735">
    <property type="term" value="F:structural constituent of ribosome"/>
    <property type="evidence" value="ECO:0000318"/>
    <property type="project" value="GO_Central"/>
</dbReference>
<dbReference type="GO" id="GO:0006412">
    <property type="term" value="P:translation"/>
    <property type="evidence" value="ECO:0007669"/>
    <property type="project" value="UniProtKB-UniRule"/>
</dbReference>
<dbReference type="FunFam" id="3.30.1490.10:FF:000001">
    <property type="entry name" value="30S ribosomal protein S8"/>
    <property type="match status" value="1"/>
</dbReference>
<dbReference type="FunFam" id="3.30.1370.30:FF:000004">
    <property type="entry name" value="30S ribosomal protein S8, chloroplastic"/>
    <property type="match status" value="1"/>
</dbReference>
<dbReference type="Gene3D" id="3.30.1370.30">
    <property type="match status" value="1"/>
</dbReference>
<dbReference type="Gene3D" id="3.30.1490.10">
    <property type="match status" value="1"/>
</dbReference>
<dbReference type="HAMAP" id="MF_01302_B">
    <property type="entry name" value="Ribosomal_uS8_B"/>
    <property type="match status" value="1"/>
</dbReference>
<dbReference type="InterPro" id="IPR000630">
    <property type="entry name" value="Ribosomal_uS8"/>
</dbReference>
<dbReference type="InterPro" id="IPR047863">
    <property type="entry name" value="Ribosomal_uS8_CS"/>
</dbReference>
<dbReference type="InterPro" id="IPR035987">
    <property type="entry name" value="Ribosomal_uS8_sf"/>
</dbReference>
<dbReference type="NCBIfam" id="NF001109">
    <property type="entry name" value="PRK00136.1"/>
    <property type="match status" value="1"/>
</dbReference>
<dbReference type="PANTHER" id="PTHR11758">
    <property type="entry name" value="40S RIBOSOMAL PROTEIN S15A"/>
    <property type="match status" value="1"/>
</dbReference>
<dbReference type="Pfam" id="PF00410">
    <property type="entry name" value="Ribosomal_S8"/>
    <property type="match status" value="1"/>
</dbReference>
<dbReference type="SUPFAM" id="SSF56047">
    <property type="entry name" value="Ribosomal protein S8"/>
    <property type="match status" value="1"/>
</dbReference>
<dbReference type="PROSITE" id="PS00053">
    <property type="entry name" value="RIBOSOMAL_S8"/>
    <property type="match status" value="1"/>
</dbReference>
<protein>
    <recommendedName>
        <fullName evidence="2">Small ribosomal subunit protein uS8c</fullName>
    </recommendedName>
    <alternativeName>
        <fullName>30S ribosomal protein S8, chloroplastic</fullName>
    </alternativeName>
</protein>
<accession>P08530</accession>
<comment type="function">
    <text evidence="1">One of the primary rRNA binding proteins, it binds directly to 16S rRNA central domain where it helps coordinate assembly of the platform of the 30S subunit.</text>
</comment>
<comment type="subunit">
    <text>Part of the 30S ribosomal subunit.</text>
</comment>
<comment type="subcellular location">
    <subcellularLocation>
        <location>Plastid</location>
        <location>Chloroplast</location>
    </subcellularLocation>
</comment>
<comment type="similarity">
    <text evidence="2">Belongs to the universal ribosomal protein uS8 family.</text>
</comment>
<proteinExistence type="inferred from homology"/>
<geneLocation type="chloroplast"/>